<protein>
    <recommendedName>
        <fullName evidence="1">Protoheme IX farnesyltransferase</fullName>
        <ecNumber evidence="1">2.5.1.141</ecNumber>
    </recommendedName>
    <alternativeName>
        <fullName evidence="1">Heme B farnesyltransferase</fullName>
    </alternativeName>
    <alternativeName>
        <fullName evidence="1">Heme O synthase</fullName>
    </alternativeName>
</protein>
<name>COXX_DINSH</name>
<evidence type="ECO:0000255" key="1">
    <source>
        <dbReference type="HAMAP-Rule" id="MF_00154"/>
    </source>
</evidence>
<evidence type="ECO:0000305" key="2"/>
<organism>
    <name type="scientific">Dinoroseobacter shibae (strain DSM 16493 / NCIMB 14021 / DFL 12)</name>
    <dbReference type="NCBI Taxonomy" id="398580"/>
    <lineage>
        <taxon>Bacteria</taxon>
        <taxon>Pseudomonadati</taxon>
        <taxon>Pseudomonadota</taxon>
        <taxon>Alphaproteobacteria</taxon>
        <taxon>Rhodobacterales</taxon>
        <taxon>Roseobacteraceae</taxon>
        <taxon>Dinoroseobacter</taxon>
    </lineage>
</organism>
<keyword id="KW-0997">Cell inner membrane</keyword>
<keyword id="KW-1003">Cell membrane</keyword>
<keyword id="KW-0350">Heme biosynthesis</keyword>
<keyword id="KW-0472">Membrane</keyword>
<keyword id="KW-1185">Reference proteome</keyword>
<keyword id="KW-0808">Transferase</keyword>
<keyword id="KW-0812">Transmembrane</keyword>
<keyword id="KW-1133">Transmembrane helix</keyword>
<gene>
    <name evidence="1" type="primary">ctaB</name>
    <name type="ordered locus">Dshi_1141</name>
</gene>
<reference key="1">
    <citation type="journal article" date="2010" name="ISME J.">
        <title>The complete genome sequence of the algal symbiont Dinoroseobacter shibae: a hitchhiker's guide to life in the sea.</title>
        <authorList>
            <person name="Wagner-Dobler I."/>
            <person name="Ballhausen B."/>
            <person name="Berger M."/>
            <person name="Brinkhoff T."/>
            <person name="Buchholz I."/>
            <person name="Bunk B."/>
            <person name="Cypionka H."/>
            <person name="Daniel R."/>
            <person name="Drepper T."/>
            <person name="Gerdts G."/>
            <person name="Hahnke S."/>
            <person name="Han C."/>
            <person name="Jahn D."/>
            <person name="Kalhoefer D."/>
            <person name="Kiss H."/>
            <person name="Klenk H.P."/>
            <person name="Kyrpides N."/>
            <person name="Liebl W."/>
            <person name="Liesegang H."/>
            <person name="Meincke L."/>
            <person name="Pati A."/>
            <person name="Petersen J."/>
            <person name="Piekarski T."/>
            <person name="Pommerenke C."/>
            <person name="Pradella S."/>
            <person name="Pukall R."/>
            <person name="Rabus R."/>
            <person name="Stackebrandt E."/>
            <person name="Thole S."/>
            <person name="Thompson L."/>
            <person name="Tielen P."/>
            <person name="Tomasch J."/>
            <person name="von Jan M."/>
            <person name="Wanphrut N."/>
            <person name="Wichels A."/>
            <person name="Zech H."/>
            <person name="Simon M."/>
        </authorList>
    </citation>
    <scope>NUCLEOTIDE SEQUENCE [LARGE SCALE GENOMIC DNA]</scope>
    <source>
        <strain>DSM 16493 / NCIMB 14021 / DFL 12</strain>
    </source>
</reference>
<proteinExistence type="inferred from homology"/>
<dbReference type="EC" id="2.5.1.141" evidence="1"/>
<dbReference type="EMBL" id="CP000830">
    <property type="protein sequence ID" value="ABV92883.1"/>
    <property type="status" value="ALT_INIT"/>
    <property type="molecule type" value="Genomic_DNA"/>
</dbReference>
<dbReference type="RefSeq" id="WP_044027652.1">
    <property type="nucleotide sequence ID" value="NC_009952.1"/>
</dbReference>
<dbReference type="SMR" id="A8LHT6"/>
<dbReference type="STRING" id="398580.Dshi_1141"/>
<dbReference type="KEGG" id="dsh:Dshi_1141"/>
<dbReference type="eggNOG" id="COG0109">
    <property type="taxonomic scope" value="Bacteria"/>
</dbReference>
<dbReference type="HOGENOM" id="CLU_029631_0_2_5"/>
<dbReference type="OrthoDB" id="9814417at2"/>
<dbReference type="UniPathway" id="UPA00834">
    <property type="reaction ID" value="UER00712"/>
</dbReference>
<dbReference type="Proteomes" id="UP000006833">
    <property type="component" value="Chromosome"/>
</dbReference>
<dbReference type="GO" id="GO:0005886">
    <property type="term" value="C:plasma membrane"/>
    <property type="evidence" value="ECO:0007669"/>
    <property type="project" value="UniProtKB-SubCell"/>
</dbReference>
<dbReference type="GO" id="GO:0008495">
    <property type="term" value="F:protoheme IX farnesyltransferase activity"/>
    <property type="evidence" value="ECO:0007669"/>
    <property type="project" value="UniProtKB-UniRule"/>
</dbReference>
<dbReference type="GO" id="GO:0048034">
    <property type="term" value="P:heme O biosynthetic process"/>
    <property type="evidence" value="ECO:0007669"/>
    <property type="project" value="UniProtKB-UniRule"/>
</dbReference>
<dbReference type="CDD" id="cd13957">
    <property type="entry name" value="PT_UbiA_Cox10"/>
    <property type="match status" value="1"/>
</dbReference>
<dbReference type="Gene3D" id="1.10.357.140">
    <property type="entry name" value="UbiA prenyltransferase"/>
    <property type="match status" value="1"/>
</dbReference>
<dbReference type="HAMAP" id="MF_00154">
    <property type="entry name" value="CyoE_CtaB"/>
    <property type="match status" value="1"/>
</dbReference>
<dbReference type="InterPro" id="IPR006369">
    <property type="entry name" value="Protohaem_IX_farnesylTrfase"/>
</dbReference>
<dbReference type="InterPro" id="IPR000537">
    <property type="entry name" value="UbiA_prenyltransferase"/>
</dbReference>
<dbReference type="InterPro" id="IPR030470">
    <property type="entry name" value="UbiA_prenylTrfase_CS"/>
</dbReference>
<dbReference type="InterPro" id="IPR044878">
    <property type="entry name" value="UbiA_sf"/>
</dbReference>
<dbReference type="NCBIfam" id="TIGR01473">
    <property type="entry name" value="cyoE_ctaB"/>
    <property type="match status" value="1"/>
</dbReference>
<dbReference type="NCBIfam" id="NF003349">
    <property type="entry name" value="PRK04375.1-2"/>
    <property type="match status" value="1"/>
</dbReference>
<dbReference type="PANTHER" id="PTHR43448:SF7">
    <property type="entry name" value="4-HYDROXYBENZOATE SOLANESYLTRANSFERASE"/>
    <property type="match status" value="1"/>
</dbReference>
<dbReference type="PANTHER" id="PTHR43448">
    <property type="entry name" value="PROTOHEME IX FARNESYLTRANSFERASE, MITOCHONDRIAL"/>
    <property type="match status" value="1"/>
</dbReference>
<dbReference type="Pfam" id="PF01040">
    <property type="entry name" value="UbiA"/>
    <property type="match status" value="1"/>
</dbReference>
<dbReference type="PROSITE" id="PS00943">
    <property type="entry name" value="UBIA"/>
    <property type="match status" value="1"/>
</dbReference>
<accession>A8LHT6</accession>
<comment type="function">
    <text evidence="1">Converts heme B (protoheme IX) to heme O by substitution of the vinyl group on carbon 2 of heme B porphyrin ring with a hydroxyethyl farnesyl side group.</text>
</comment>
<comment type="catalytic activity">
    <reaction evidence="1">
        <text>heme b + (2E,6E)-farnesyl diphosphate + H2O = Fe(II)-heme o + diphosphate</text>
        <dbReference type="Rhea" id="RHEA:28070"/>
        <dbReference type="ChEBI" id="CHEBI:15377"/>
        <dbReference type="ChEBI" id="CHEBI:33019"/>
        <dbReference type="ChEBI" id="CHEBI:60344"/>
        <dbReference type="ChEBI" id="CHEBI:60530"/>
        <dbReference type="ChEBI" id="CHEBI:175763"/>
        <dbReference type="EC" id="2.5.1.141"/>
    </reaction>
</comment>
<comment type="pathway">
    <text evidence="1">Porphyrin-containing compound metabolism; heme O biosynthesis; heme O from protoheme: step 1/1.</text>
</comment>
<comment type="subunit">
    <text evidence="1">Interacts with CtaA.</text>
</comment>
<comment type="subcellular location">
    <subcellularLocation>
        <location evidence="1">Cell inner membrane</location>
        <topology evidence="1">Multi-pass membrane protein</topology>
    </subcellularLocation>
</comment>
<comment type="miscellaneous">
    <text evidence="1">Carbon 2 of the heme B porphyrin ring is defined according to the Fischer nomenclature.</text>
</comment>
<comment type="similarity">
    <text evidence="1">Belongs to the UbiA prenyltransferase family. Protoheme IX farnesyltransferase subfamily.</text>
</comment>
<comment type="sequence caution" evidence="2">
    <conflict type="erroneous initiation">
        <sequence resource="EMBL-CDS" id="ABV92883"/>
    </conflict>
</comment>
<sequence length="315" mass="33788">MSDASFDRSMPLSGEGSFGDYFALLKPRVMSLVVFTALVGLLVAPVSLHPMVGFCAILFIAVGAGASGALNMWWDADIDVIMKRTAGRPVPAGKVQPGEALALGLGLSGLSVVMLALATNLLAAGLLAFTIFFYAVVYSMWLKRSTPQNIVIGGAAGAFPPMIGWVAATGSVSLEAVLMFALIFMWTPPHFWALALFMKSDYHDAGVPMLTVTHGRKSTRTHILVYTVLLVPVALGLALTPVAGPLYLATALVLNAIFLKGAWDIWRRDEAQAEADKYATEKRFFKFSLLYLALHFTALLAEAILTRSGLWTFGG</sequence>
<feature type="chain" id="PRO_0000346043" description="Protoheme IX farnesyltransferase">
    <location>
        <begin position="1"/>
        <end position="315"/>
    </location>
</feature>
<feature type="transmembrane region" description="Helical" evidence="1">
    <location>
        <begin position="21"/>
        <end position="41"/>
    </location>
</feature>
<feature type="transmembrane region" description="Helical" evidence="1">
    <location>
        <begin position="52"/>
        <end position="74"/>
    </location>
</feature>
<feature type="transmembrane region" description="Helical" evidence="1">
    <location>
        <begin position="98"/>
        <end position="118"/>
    </location>
</feature>
<feature type="transmembrane region" description="Helical" evidence="1">
    <location>
        <begin position="121"/>
        <end position="141"/>
    </location>
</feature>
<feature type="transmembrane region" description="Helical" evidence="1">
    <location>
        <begin position="150"/>
        <end position="170"/>
    </location>
</feature>
<feature type="transmembrane region" description="Helical" evidence="1">
    <location>
        <begin position="177"/>
        <end position="197"/>
    </location>
</feature>
<feature type="transmembrane region" description="Helical" evidence="1">
    <location>
        <begin position="223"/>
        <end position="243"/>
    </location>
</feature>
<feature type="transmembrane region" description="Helical" evidence="1">
    <location>
        <begin position="246"/>
        <end position="266"/>
    </location>
</feature>
<feature type="transmembrane region" description="Helical" evidence="1">
    <location>
        <begin position="284"/>
        <end position="304"/>
    </location>
</feature>